<organism>
    <name type="scientific">Vibrio parahaemolyticus serotype O3:K6 (strain RIMD 2210633)</name>
    <dbReference type="NCBI Taxonomy" id="223926"/>
    <lineage>
        <taxon>Bacteria</taxon>
        <taxon>Pseudomonadati</taxon>
        <taxon>Pseudomonadota</taxon>
        <taxon>Gammaproteobacteria</taxon>
        <taxon>Vibrionales</taxon>
        <taxon>Vibrionaceae</taxon>
        <taxon>Vibrio</taxon>
    </lineage>
</organism>
<gene>
    <name type="primary">trpC</name>
    <name type="synonym">trpC-TRPF</name>
    <name type="ordered locus">VP1959</name>
</gene>
<dbReference type="EC" id="4.1.1.48"/>
<dbReference type="EC" id="5.3.1.24"/>
<dbReference type="EMBL" id="X17149">
    <property type="protein sequence ID" value="CAA35034.1"/>
    <property type="molecule type" value="Genomic_DNA"/>
</dbReference>
<dbReference type="EMBL" id="BA000031">
    <property type="protein sequence ID" value="BAC60222.1"/>
    <property type="molecule type" value="Genomic_DNA"/>
</dbReference>
<dbReference type="RefSeq" id="NP_798338.1">
    <property type="nucleotide sequence ID" value="NC_004603.1"/>
</dbReference>
<dbReference type="SMR" id="P22098"/>
<dbReference type="KEGG" id="vpa:VP1959"/>
<dbReference type="PATRIC" id="fig|223926.6.peg.1874"/>
<dbReference type="eggNOG" id="COG0134">
    <property type="taxonomic scope" value="Bacteria"/>
</dbReference>
<dbReference type="eggNOG" id="COG0135">
    <property type="taxonomic scope" value="Bacteria"/>
</dbReference>
<dbReference type="HOGENOM" id="CLU_007713_1_1_6"/>
<dbReference type="UniPathway" id="UPA00035">
    <property type="reaction ID" value="UER00042"/>
</dbReference>
<dbReference type="UniPathway" id="UPA00035">
    <property type="reaction ID" value="UER00043"/>
</dbReference>
<dbReference type="Proteomes" id="UP000002493">
    <property type="component" value="Chromosome 1"/>
</dbReference>
<dbReference type="GO" id="GO:0004425">
    <property type="term" value="F:indole-3-glycerol-phosphate synthase activity"/>
    <property type="evidence" value="ECO:0007669"/>
    <property type="project" value="UniProtKB-UniRule"/>
</dbReference>
<dbReference type="GO" id="GO:0004640">
    <property type="term" value="F:phosphoribosylanthranilate isomerase activity"/>
    <property type="evidence" value="ECO:0007669"/>
    <property type="project" value="UniProtKB-UniRule"/>
</dbReference>
<dbReference type="GO" id="GO:0000162">
    <property type="term" value="P:L-tryptophan biosynthetic process"/>
    <property type="evidence" value="ECO:0007669"/>
    <property type="project" value="UniProtKB-UniRule"/>
</dbReference>
<dbReference type="CDD" id="cd00331">
    <property type="entry name" value="IGPS"/>
    <property type="match status" value="1"/>
</dbReference>
<dbReference type="CDD" id="cd00405">
    <property type="entry name" value="PRAI"/>
    <property type="match status" value="1"/>
</dbReference>
<dbReference type="FunFam" id="3.20.20.70:FF:000024">
    <property type="entry name" value="Indole-3-glycerol phosphate synthase"/>
    <property type="match status" value="1"/>
</dbReference>
<dbReference type="FunFam" id="3.20.20.70:FF:000165">
    <property type="entry name" value="Multifunctional fusion protein"/>
    <property type="match status" value="1"/>
</dbReference>
<dbReference type="Gene3D" id="3.20.20.70">
    <property type="entry name" value="Aldolase class I"/>
    <property type="match status" value="2"/>
</dbReference>
<dbReference type="HAMAP" id="MF_00134_B">
    <property type="entry name" value="IGPS_B"/>
    <property type="match status" value="1"/>
</dbReference>
<dbReference type="HAMAP" id="MF_00135">
    <property type="entry name" value="PRAI"/>
    <property type="match status" value="1"/>
</dbReference>
<dbReference type="InterPro" id="IPR013785">
    <property type="entry name" value="Aldolase_TIM"/>
</dbReference>
<dbReference type="InterPro" id="IPR045186">
    <property type="entry name" value="Indole-3-glycerol_P_synth"/>
</dbReference>
<dbReference type="InterPro" id="IPR013798">
    <property type="entry name" value="Indole-3-glycerol_P_synth_dom"/>
</dbReference>
<dbReference type="InterPro" id="IPR001468">
    <property type="entry name" value="Indole-3-GlycerolPSynthase_CS"/>
</dbReference>
<dbReference type="InterPro" id="IPR001240">
    <property type="entry name" value="PRAI_dom"/>
</dbReference>
<dbReference type="InterPro" id="IPR011060">
    <property type="entry name" value="RibuloseP-bd_barrel"/>
</dbReference>
<dbReference type="NCBIfam" id="NF001377">
    <property type="entry name" value="PRK00278.2-4"/>
    <property type="match status" value="1"/>
</dbReference>
<dbReference type="NCBIfam" id="NF006945">
    <property type="entry name" value="PRK09427.1"/>
    <property type="match status" value="1"/>
</dbReference>
<dbReference type="PANTHER" id="PTHR22854:SF2">
    <property type="entry name" value="INDOLE-3-GLYCEROL-PHOSPHATE SYNTHASE"/>
    <property type="match status" value="1"/>
</dbReference>
<dbReference type="PANTHER" id="PTHR22854">
    <property type="entry name" value="TRYPTOPHAN BIOSYNTHESIS PROTEIN"/>
    <property type="match status" value="1"/>
</dbReference>
<dbReference type="Pfam" id="PF00218">
    <property type="entry name" value="IGPS"/>
    <property type="match status" value="1"/>
</dbReference>
<dbReference type="Pfam" id="PF00697">
    <property type="entry name" value="PRAI"/>
    <property type="match status" value="1"/>
</dbReference>
<dbReference type="SUPFAM" id="SSF51366">
    <property type="entry name" value="Ribulose-phoshate binding barrel"/>
    <property type="match status" value="2"/>
</dbReference>
<dbReference type="PROSITE" id="PS00614">
    <property type="entry name" value="IGPS"/>
    <property type="match status" value="1"/>
</dbReference>
<name>TRPC_VIBPA</name>
<accession>P22098</accession>
<comment type="function">
    <text evidence="1">Bifunctional enzyme that catalyzes two sequential steps of tryptophan biosynthetic pathway. The first reaction is catalyzed by the isomerase, coded by the TrpF domain; the second reaction is catalyzed by the synthase, coded by the TrpC domain (By similarity).</text>
</comment>
<comment type="catalytic activity">
    <reaction>
        <text>N-(5-phospho-beta-D-ribosyl)anthranilate = 1-(2-carboxyphenylamino)-1-deoxy-D-ribulose 5-phosphate</text>
        <dbReference type="Rhea" id="RHEA:21540"/>
        <dbReference type="ChEBI" id="CHEBI:18277"/>
        <dbReference type="ChEBI" id="CHEBI:58613"/>
        <dbReference type="EC" id="5.3.1.24"/>
    </reaction>
</comment>
<comment type="catalytic activity">
    <reaction>
        <text>1-(2-carboxyphenylamino)-1-deoxy-D-ribulose 5-phosphate + H(+) = (1S,2R)-1-C-(indol-3-yl)glycerol 3-phosphate + CO2 + H2O</text>
        <dbReference type="Rhea" id="RHEA:23476"/>
        <dbReference type="ChEBI" id="CHEBI:15377"/>
        <dbReference type="ChEBI" id="CHEBI:15378"/>
        <dbReference type="ChEBI" id="CHEBI:16526"/>
        <dbReference type="ChEBI" id="CHEBI:58613"/>
        <dbReference type="ChEBI" id="CHEBI:58866"/>
        <dbReference type="EC" id="4.1.1.48"/>
    </reaction>
</comment>
<comment type="pathway">
    <text>Amino-acid biosynthesis; L-tryptophan biosynthesis; L-tryptophan from chorismate: step 3/5.</text>
</comment>
<comment type="pathway">
    <text>Amino-acid biosynthesis; L-tryptophan biosynthesis; L-tryptophan from chorismate: step 4/5.</text>
</comment>
<comment type="subunit">
    <text>Monomer.</text>
</comment>
<comment type="similarity">
    <text evidence="2">In the N-terminal section; belongs to the TrpC family.</text>
</comment>
<comment type="similarity">
    <text evidence="2">In the C-terminal section; belongs to the TrpF family.</text>
</comment>
<protein>
    <recommendedName>
        <fullName>Tryptophan biosynthesis protein TrpCF</fullName>
    </recommendedName>
    <domain>
        <recommendedName>
            <fullName>Indole-3-glycerol phosphate synthase</fullName>
            <shortName>IGPS</shortName>
            <ecNumber>4.1.1.48</ecNumber>
        </recommendedName>
    </domain>
    <domain>
        <recommendedName>
            <fullName>N-(5'-phospho-ribosyl)anthranilate isomerase</fullName>
            <shortName>PRAI</shortName>
            <ecNumber>5.3.1.24</ecNumber>
        </recommendedName>
    </domain>
</protein>
<feature type="chain" id="PRO_0000154286" description="Tryptophan biosynthesis protein TrpCF">
    <location>
        <begin position="1"/>
        <end position="481"/>
    </location>
</feature>
<feature type="region of interest" description="Indole-3-glycerol phosphate synthase">
    <location>
        <begin position="1"/>
        <end position="283"/>
    </location>
</feature>
<feature type="region of interest" description="N-(5'-phosphoribosyl)anthranilate isomerase">
    <location>
        <begin position="284"/>
        <end position="481"/>
    </location>
</feature>
<feature type="sequence conflict" description="In Ref. 1; CAA35034." evidence="2" ref="1">
    <original>R</original>
    <variation>K</variation>
    <location>
        <position position="203"/>
    </location>
</feature>
<feature type="sequence conflict" description="In Ref. 1; CAA35034." evidence="2" ref="1">
    <original>G</original>
    <variation>A</variation>
    <location>
        <position position="449"/>
    </location>
</feature>
<feature type="sequence conflict" description="In Ref. 1; CAA35034." evidence="2" ref="1">
    <original>H</original>
    <variation>R</variation>
    <location>
        <position position="476"/>
    </location>
</feature>
<evidence type="ECO:0000250" key="1"/>
<evidence type="ECO:0000305" key="2"/>
<keyword id="KW-0028">Amino-acid biosynthesis</keyword>
<keyword id="KW-0057">Aromatic amino acid biosynthesis</keyword>
<keyword id="KW-0210">Decarboxylase</keyword>
<keyword id="KW-0413">Isomerase</keyword>
<keyword id="KW-0456">Lyase</keyword>
<keyword id="KW-0511">Multifunctional enzyme</keyword>
<keyword id="KW-0822">Tryptophan biosynthesis</keyword>
<sequence length="481" mass="52974">MKMTDFNTQQANNLSEHVSKKEAEMAEVLAKIVRDKYQWVAERKASQHLSTFQSDLLPSDRSFYDALSGDKTVFITECKKASPSKGLIRNDFDLDYIASVYNNYADAISVLTDEKYFQGSFDFLPQVRRQVKQPVLCKDFMVDTYQVYLARHYGADAVLLMLSVLNDEEYKALEEAAHSLNMGILTEVSNEEELHRAVQLGARVIGINNRNLRDLTTDLNRTKALAPTIRKLAPNATVISESGIYTHQQVRDLAEYADGFLIGSSLMAEDNLELAVRKVTLGENKVCGLTHPDDAAKAYQAGAVFGGLIFVEKSKRAVDFESARLTMSGAPLNYVGVFQNHDVDYVASIVTSLGLKAVQLHGLEDQEYVNQLKTELPVGVEIWKAYGVADTKPSLLADNIDRHLLDAQVGTQTGGTGHVFDWSLIGDPSQIMLAGGLSPENAQQAAKLGCLGLDLNSGVESAPGKKDSQKLQAAFHAIRNY</sequence>
<proteinExistence type="inferred from homology"/>
<reference key="1">
    <citation type="journal article" date="1991" name="DNA Seq.">
        <title>Sequence and features of the tryptophan operon of Vibrio parahemolyticus.</title>
        <authorList>
            <person name="Crawford I.P."/>
            <person name="Han C.Y."/>
            <person name="Silverman M."/>
        </authorList>
    </citation>
    <scope>NUCLEOTIDE SEQUENCE [GENOMIC DNA]</scope>
    <source>
        <strain>BB22</strain>
    </source>
</reference>
<reference key="2">
    <citation type="journal article" date="2003" name="Lancet">
        <title>Genome sequence of Vibrio parahaemolyticus: a pathogenic mechanism distinct from that of V. cholerae.</title>
        <authorList>
            <person name="Makino K."/>
            <person name="Oshima K."/>
            <person name="Kurokawa K."/>
            <person name="Yokoyama K."/>
            <person name="Uda T."/>
            <person name="Tagomori K."/>
            <person name="Iijima Y."/>
            <person name="Najima M."/>
            <person name="Nakano M."/>
            <person name="Yamashita A."/>
            <person name="Kubota Y."/>
            <person name="Kimura S."/>
            <person name="Yasunaga T."/>
            <person name="Honda T."/>
            <person name="Shinagawa H."/>
            <person name="Hattori M."/>
            <person name="Iida T."/>
        </authorList>
    </citation>
    <scope>NUCLEOTIDE SEQUENCE [LARGE SCALE GENOMIC DNA]</scope>
    <source>
        <strain>RIMD 2210633</strain>
    </source>
</reference>